<feature type="chain" id="PRO_0000381233" description="Biotin synthase">
    <location>
        <begin position="1"/>
        <end position="331"/>
    </location>
</feature>
<feature type="domain" description="Radical SAM core" evidence="2">
    <location>
        <begin position="52"/>
        <end position="281"/>
    </location>
</feature>
<feature type="binding site" evidence="1">
    <location>
        <position position="70"/>
    </location>
    <ligand>
        <name>[4Fe-4S] cluster</name>
        <dbReference type="ChEBI" id="CHEBI:49883"/>
        <note>4Fe-4S-S-AdoMet</note>
    </ligand>
</feature>
<feature type="binding site" evidence="1">
    <location>
        <position position="74"/>
    </location>
    <ligand>
        <name>[4Fe-4S] cluster</name>
        <dbReference type="ChEBI" id="CHEBI:49883"/>
        <note>4Fe-4S-S-AdoMet</note>
    </ligand>
</feature>
<feature type="binding site" evidence="1">
    <location>
        <position position="77"/>
    </location>
    <ligand>
        <name>[4Fe-4S] cluster</name>
        <dbReference type="ChEBI" id="CHEBI:49883"/>
        <note>4Fe-4S-S-AdoMet</note>
    </ligand>
</feature>
<feature type="binding site" evidence="1">
    <location>
        <position position="114"/>
    </location>
    <ligand>
        <name>[2Fe-2S] cluster</name>
        <dbReference type="ChEBI" id="CHEBI:190135"/>
    </ligand>
</feature>
<feature type="binding site" evidence="1">
    <location>
        <position position="146"/>
    </location>
    <ligand>
        <name>[2Fe-2S] cluster</name>
        <dbReference type="ChEBI" id="CHEBI:190135"/>
    </ligand>
</feature>
<feature type="binding site" evidence="1">
    <location>
        <position position="206"/>
    </location>
    <ligand>
        <name>[2Fe-2S] cluster</name>
        <dbReference type="ChEBI" id="CHEBI:190135"/>
    </ligand>
</feature>
<feature type="binding site" evidence="1">
    <location>
        <position position="276"/>
    </location>
    <ligand>
        <name>[2Fe-2S] cluster</name>
        <dbReference type="ChEBI" id="CHEBI:190135"/>
    </ligand>
</feature>
<proteinExistence type="inferred from homology"/>
<comment type="function">
    <text evidence="1">Catalyzes the conversion of dethiobiotin (DTB) to biotin by the insertion of a sulfur atom into dethiobiotin via a radical-based mechanism.</text>
</comment>
<comment type="catalytic activity">
    <reaction evidence="1">
        <text>(4R,5S)-dethiobiotin + (sulfur carrier)-SH + 2 reduced [2Fe-2S]-[ferredoxin] + 2 S-adenosyl-L-methionine = (sulfur carrier)-H + biotin + 2 5'-deoxyadenosine + 2 L-methionine + 2 oxidized [2Fe-2S]-[ferredoxin]</text>
        <dbReference type="Rhea" id="RHEA:22060"/>
        <dbReference type="Rhea" id="RHEA-COMP:10000"/>
        <dbReference type="Rhea" id="RHEA-COMP:10001"/>
        <dbReference type="Rhea" id="RHEA-COMP:14737"/>
        <dbReference type="Rhea" id="RHEA-COMP:14739"/>
        <dbReference type="ChEBI" id="CHEBI:17319"/>
        <dbReference type="ChEBI" id="CHEBI:29917"/>
        <dbReference type="ChEBI" id="CHEBI:33737"/>
        <dbReference type="ChEBI" id="CHEBI:33738"/>
        <dbReference type="ChEBI" id="CHEBI:57586"/>
        <dbReference type="ChEBI" id="CHEBI:57844"/>
        <dbReference type="ChEBI" id="CHEBI:59789"/>
        <dbReference type="ChEBI" id="CHEBI:64428"/>
        <dbReference type="ChEBI" id="CHEBI:149473"/>
        <dbReference type="EC" id="2.8.1.6"/>
    </reaction>
</comment>
<comment type="cofactor">
    <cofactor evidence="1">
        <name>[4Fe-4S] cluster</name>
        <dbReference type="ChEBI" id="CHEBI:49883"/>
    </cofactor>
    <text evidence="1">Binds 1 [4Fe-4S] cluster. The cluster is coordinated with 3 cysteines and an exchangeable S-adenosyl-L-methionine.</text>
</comment>
<comment type="cofactor">
    <cofactor evidence="1">
        <name>[2Fe-2S] cluster</name>
        <dbReference type="ChEBI" id="CHEBI:190135"/>
    </cofactor>
    <text evidence="1">Binds 1 [2Fe-2S] cluster. The cluster is coordinated with 3 cysteines and 1 arginine.</text>
</comment>
<comment type="pathway">
    <text evidence="1">Cofactor biosynthesis; biotin biosynthesis; biotin from 7,8-diaminononanoate: step 2/2.</text>
</comment>
<comment type="subunit">
    <text evidence="1">Homodimer.</text>
</comment>
<comment type="similarity">
    <text evidence="1">Belongs to the radical SAM superfamily. Biotin synthase family.</text>
</comment>
<reference key="1">
    <citation type="journal article" date="2007" name="PLoS ONE">
        <title>Paradoxical DNA repair and peroxide resistance gene conservation in Bacillus pumilus SAFR-032.</title>
        <authorList>
            <person name="Gioia J."/>
            <person name="Yerrapragada S."/>
            <person name="Qin X."/>
            <person name="Jiang H."/>
            <person name="Igboeli O.C."/>
            <person name="Muzny D."/>
            <person name="Dugan-Rocha S."/>
            <person name="Ding Y."/>
            <person name="Hawes A."/>
            <person name="Liu W."/>
            <person name="Perez L."/>
            <person name="Kovar C."/>
            <person name="Dinh H."/>
            <person name="Lee S."/>
            <person name="Nazareth L."/>
            <person name="Blyth P."/>
            <person name="Holder M."/>
            <person name="Buhay C."/>
            <person name="Tirumalai M.R."/>
            <person name="Liu Y."/>
            <person name="Dasgupta I."/>
            <person name="Bokhetache L."/>
            <person name="Fujita M."/>
            <person name="Karouia F."/>
            <person name="Eswara Moorthy P."/>
            <person name="Siefert J."/>
            <person name="Uzman A."/>
            <person name="Buzumbo P."/>
            <person name="Verma A."/>
            <person name="Zwiya H."/>
            <person name="McWilliams B.D."/>
            <person name="Olowu A."/>
            <person name="Clinkenbeard K.D."/>
            <person name="Newcombe D."/>
            <person name="Golebiewski L."/>
            <person name="Petrosino J.F."/>
            <person name="Nicholson W.L."/>
            <person name="Fox G.E."/>
            <person name="Venkateswaran K."/>
            <person name="Highlander S.K."/>
            <person name="Weinstock G.M."/>
        </authorList>
    </citation>
    <scope>NUCLEOTIDE SEQUENCE [LARGE SCALE GENOMIC DNA]</scope>
    <source>
        <strain>SAFR-032</strain>
    </source>
</reference>
<protein>
    <recommendedName>
        <fullName evidence="1">Biotin synthase</fullName>
        <ecNumber evidence="1">2.8.1.6</ecNumber>
    </recommendedName>
</protein>
<evidence type="ECO:0000255" key="1">
    <source>
        <dbReference type="HAMAP-Rule" id="MF_01694"/>
    </source>
</evidence>
<evidence type="ECO:0000255" key="2">
    <source>
        <dbReference type="PROSITE-ProRule" id="PRU01266"/>
    </source>
</evidence>
<sequence>MGKPITLSWEAITEKALKNERITLQEGLDILEADDRELLSIMHAAYQVRFHFFQNKVKLNMIFNAKSGYCPENCGYCSQSIISNAPVERYTMLDQKTIVAGAREALKRKAGTYCIVASGRAPSHRELDEVTAAVKEITETMPLKVCACLGLLNEDKAKRLKEAGVHRYNHNINTHQDHHPHITTTHTYHDRLSTLKKVKQSGMSPCSGVIIGMGETNQQIVEMAFALRAIDADSIPVNFLHAIEGTPLEHQERTHPIKALKVLALMRFVNPTKEIRVSGGREFNLRTLQPLALYAANSIFVGDYLTTKGQQVQTDHHIIEDLGFDIEECAL</sequence>
<name>BIOB_BACP2</name>
<dbReference type="EC" id="2.8.1.6" evidence="1"/>
<dbReference type="EMBL" id="CP000813">
    <property type="protein sequence ID" value="ABV63435.1"/>
    <property type="molecule type" value="Genomic_DNA"/>
</dbReference>
<dbReference type="RefSeq" id="WP_012011059.1">
    <property type="nucleotide sequence ID" value="NC_009848.4"/>
</dbReference>
<dbReference type="SMR" id="A8FGR8"/>
<dbReference type="STRING" id="315750.BPUM_2779"/>
<dbReference type="GeneID" id="5622068"/>
<dbReference type="KEGG" id="bpu:BPUM_2779"/>
<dbReference type="eggNOG" id="COG0502">
    <property type="taxonomic scope" value="Bacteria"/>
</dbReference>
<dbReference type="HOGENOM" id="CLU_033172_2_1_9"/>
<dbReference type="OrthoDB" id="9786826at2"/>
<dbReference type="UniPathway" id="UPA00078">
    <property type="reaction ID" value="UER00162"/>
</dbReference>
<dbReference type="Proteomes" id="UP000001355">
    <property type="component" value="Chromosome"/>
</dbReference>
<dbReference type="GO" id="GO:0051537">
    <property type="term" value="F:2 iron, 2 sulfur cluster binding"/>
    <property type="evidence" value="ECO:0007669"/>
    <property type="project" value="UniProtKB-KW"/>
</dbReference>
<dbReference type="GO" id="GO:0051539">
    <property type="term" value="F:4 iron, 4 sulfur cluster binding"/>
    <property type="evidence" value="ECO:0007669"/>
    <property type="project" value="UniProtKB-KW"/>
</dbReference>
<dbReference type="GO" id="GO:0004076">
    <property type="term" value="F:biotin synthase activity"/>
    <property type="evidence" value="ECO:0007669"/>
    <property type="project" value="UniProtKB-UniRule"/>
</dbReference>
<dbReference type="GO" id="GO:0005506">
    <property type="term" value="F:iron ion binding"/>
    <property type="evidence" value="ECO:0007669"/>
    <property type="project" value="UniProtKB-UniRule"/>
</dbReference>
<dbReference type="GO" id="GO:0009102">
    <property type="term" value="P:biotin biosynthetic process"/>
    <property type="evidence" value="ECO:0007669"/>
    <property type="project" value="UniProtKB-UniRule"/>
</dbReference>
<dbReference type="CDD" id="cd01335">
    <property type="entry name" value="Radical_SAM"/>
    <property type="match status" value="1"/>
</dbReference>
<dbReference type="FunFam" id="3.20.20.70:FF:000026">
    <property type="entry name" value="Biotin synthase"/>
    <property type="match status" value="1"/>
</dbReference>
<dbReference type="Gene3D" id="3.20.20.70">
    <property type="entry name" value="Aldolase class I"/>
    <property type="match status" value="1"/>
</dbReference>
<dbReference type="HAMAP" id="MF_01694">
    <property type="entry name" value="BioB"/>
    <property type="match status" value="1"/>
</dbReference>
<dbReference type="InterPro" id="IPR013785">
    <property type="entry name" value="Aldolase_TIM"/>
</dbReference>
<dbReference type="InterPro" id="IPR010722">
    <property type="entry name" value="BATS_dom"/>
</dbReference>
<dbReference type="InterPro" id="IPR002684">
    <property type="entry name" value="Biotin_synth/BioAB"/>
</dbReference>
<dbReference type="InterPro" id="IPR024177">
    <property type="entry name" value="Biotin_synthase"/>
</dbReference>
<dbReference type="InterPro" id="IPR006638">
    <property type="entry name" value="Elp3/MiaA/NifB-like_rSAM"/>
</dbReference>
<dbReference type="InterPro" id="IPR007197">
    <property type="entry name" value="rSAM"/>
</dbReference>
<dbReference type="NCBIfam" id="TIGR00433">
    <property type="entry name" value="bioB"/>
    <property type="match status" value="1"/>
</dbReference>
<dbReference type="PANTHER" id="PTHR22976">
    <property type="entry name" value="BIOTIN SYNTHASE"/>
    <property type="match status" value="1"/>
</dbReference>
<dbReference type="PANTHER" id="PTHR22976:SF2">
    <property type="entry name" value="BIOTIN SYNTHASE, MITOCHONDRIAL"/>
    <property type="match status" value="1"/>
</dbReference>
<dbReference type="Pfam" id="PF06968">
    <property type="entry name" value="BATS"/>
    <property type="match status" value="1"/>
</dbReference>
<dbReference type="Pfam" id="PF04055">
    <property type="entry name" value="Radical_SAM"/>
    <property type="match status" value="1"/>
</dbReference>
<dbReference type="PIRSF" id="PIRSF001619">
    <property type="entry name" value="Biotin_synth"/>
    <property type="match status" value="1"/>
</dbReference>
<dbReference type="SFLD" id="SFLDG01060">
    <property type="entry name" value="BATS_domain_containing"/>
    <property type="match status" value="1"/>
</dbReference>
<dbReference type="SFLD" id="SFLDG01278">
    <property type="entry name" value="biotin_synthase_like"/>
    <property type="match status" value="1"/>
</dbReference>
<dbReference type="SMART" id="SM00876">
    <property type="entry name" value="BATS"/>
    <property type="match status" value="1"/>
</dbReference>
<dbReference type="SMART" id="SM00729">
    <property type="entry name" value="Elp3"/>
    <property type="match status" value="1"/>
</dbReference>
<dbReference type="SUPFAM" id="SSF102114">
    <property type="entry name" value="Radical SAM enzymes"/>
    <property type="match status" value="1"/>
</dbReference>
<dbReference type="PROSITE" id="PS51918">
    <property type="entry name" value="RADICAL_SAM"/>
    <property type="match status" value="1"/>
</dbReference>
<accession>A8FGR8</accession>
<organism>
    <name type="scientific">Bacillus pumilus (strain SAFR-032)</name>
    <dbReference type="NCBI Taxonomy" id="315750"/>
    <lineage>
        <taxon>Bacteria</taxon>
        <taxon>Bacillati</taxon>
        <taxon>Bacillota</taxon>
        <taxon>Bacilli</taxon>
        <taxon>Bacillales</taxon>
        <taxon>Bacillaceae</taxon>
        <taxon>Bacillus</taxon>
    </lineage>
</organism>
<keyword id="KW-0001">2Fe-2S</keyword>
<keyword id="KW-0004">4Fe-4S</keyword>
<keyword id="KW-0093">Biotin biosynthesis</keyword>
<keyword id="KW-0408">Iron</keyword>
<keyword id="KW-0411">Iron-sulfur</keyword>
<keyword id="KW-0479">Metal-binding</keyword>
<keyword id="KW-0949">S-adenosyl-L-methionine</keyword>
<keyword id="KW-0808">Transferase</keyword>
<gene>
    <name evidence="1" type="primary">bioB</name>
    <name type="ordered locus">BPUM_2779</name>
</gene>